<name>RRF_SHESA</name>
<comment type="function">
    <text evidence="1">Responsible for the release of ribosomes from messenger RNA at the termination of protein biosynthesis. May increase the efficiency of translation by recycling ribosomes from one round of translation to another.</text>
</comment>
<comment type="subcellular location">
    <subcellularLocation>
        <location evidence="1">Cytoplasm</location>
    </subcellularLocation>
</comment>
<comment type="similarity">
    <text evidence="1">Belongs to the RRF family.</text>
</comment>
<reference key="1">
    <citation type="submission" date="2006-09" db="EMBL/GenBank/DDBJ databases">
        <title>Complete sequence of chromosome 1 of Shewanella sp. ANA-3.</title>
        <authorList>
            <person name="Copeland A."/>
            <person name="Lucas S."/>
            <person name="Lapidus A."/>
            <person name="Barry K."/>
            <person name="Detter J.C."/>
            <person name="Glavina del Rio T."/>
            <person name="Hammon N."/>
            <person name="Israni S."/>
            <person name="Dalin E."/>
            <person name="Tice H."/>
            <person name="Pitluck S."/>
            <person name="Chertkov O."/>
            <person name="Brettin T."/>
            <person name="Bruce D."/>
            <person name="Han C."/>
            <person name="Tapia R."/>
            <person name="Gilna P."/>
            <person name="Schmutz J."/>
            <person name="Larimer F."/>
            <person name="Land M."/>
            <person name="Hauser L."/>
            <person name="Kyrpides N."/>
            <person name="Kim E."/>
            <person name="Newman D."/>
            <person name="Salticov C."/>
            <person name="Konstantinidis K."/>
            <person name="Klappenback J."/>
            <person name="Tiedje J."/>
            <person name="Richardson P."/>
        </authorList>
    </citation>
    <scope>NUCLEOTIDE SEQUENCE [LARGE SCALE GENOMIC DNA]</scope>
    <source>
        <strain>ANA-3</strain>
    </source>
</reference>
<keyword id="KW-0963">Cytoplasm</keyword>
<keyword id="KW-0648">Protein biosynthesis</keyword>
<sequence length="185" mass="20629">MIADIKKDAQERMGKCVEATKNQMAKVRTGRAHPSLLDSIQVSYYGTMTPLNQVANVGIEDARTLSVTVFDRSAIQAVEKAIMSSDLGLNPMSAGATLRIPLPALTEERRKDFIKVVRAEAEGGRVAIRNVRRDAISEVKKLEKAKECTEDDVRRFEDEVQKFTDAHIKKVDEILAAKEIELMEV</sequence>
<evidence type="ECO:0000255" key="1">
    <source>
        <dbReference type="HAMAP-Rule" id="MF_00040"/>
    </source>
</evidence>
<organism>
    <name type="scientific">Shewanella sp. (strain ANA-3)</name>
    <dbReference type="NCBI Taxonomy" id="94122"/>
    <lineage>
        <taxon>Bacteria</taxon>
        <taxon>Pseudomonadati</taxon>
        <taxon>Pseudomonadota</taxon>
        <taxon>Gammaproteobacteria</taxon>
        <taxon>Alteromonadales</taxon>
        <taxon>Shewanellaceae</taxon>
        <taxon>Shewanella</taxon>
    </lineage>
</organism>
<proteinExistence type="inferred from homology"/>
<accession>A0KZ20</accession>
<gene>
    <name evidence="1" type="primary">frr</name>
    <name type="ordered locus">Shewana3_2812</name>
</gene>
<protein>
    <recommendedName>
        <fullName evidence="1">Ribosome-recycling factor</fullName>
        <shortName evidence="1">RRF</shortName>
    </recommendedName>
    <alternativeName>
        <fullName evidence="1">Ribosome-releasing factor</fullName>
    </alternativeName>
</protein>
<feature type="chain" id="PRO_1000003262" description="Ribosome-recycling factor">
    <location>
        <begin position="1"/>
        <end position="185"/>
    </location>
</feature>
<dbReference type="EMBL" id="CP000469">
    <property type="protein sequence ID" value="ABK49039.1"/>
    <property type="molecule type" value="Genomic_DNA"/>
</dbReference>
<dbReference type="RefSeq" id="WP_011717689.1">
    <property type="nucleotide sequence ID" value="NC_008577.1"/>
</dbReference>
<dbReference type="SMR" id="A0KZ20"/>
<dbReference type="STRING" id="94122.Shewana3_2812"/>
<dbReference type="GeneID" id="94728750"/>
<dbReference type="KEGG" id="shn:Shewana3_2812"/>
<dbReference type="eggNOG" id="COG0233">
    <property type="taxonomic scope" value="Bacteria"/>
</dbReference>
<dbReference type="HOGENOM" id="CLU_073981_2_1_6"/>
<dbReference type="OrthoDB" id="9804006at2"/>
<dbReference type="Proteomes" id="UP000002589">
    <property type="component" value="Chromosome"/>
</dbReference>
<dbReference type="GO" id="GO:0005829">
    <property type="term" value="C:cytosol"/>
    <property type="evidence" value="ECO:0007669"/>
    <property type="project" value="GOC"/>
</dbReference>
<dbReference type="GO" id="GO:0043023">
    <property type="term" value="F:ribosomal large subunit binding"/>
    <property type="evidence" value="ECO:0007669"/>
    <property type="project" value="TreeGrafter"/>
</dbReference>
<dbReference type="GO" id="GO:0002184">
    <property type="term" value="P:cytoplasmic translational termination"/>
    <property type="evidence" value="ECO:0007669"/>
    <property type="project" value="TreeGrafter"/>
</dbReference>
<dbReference type="CDD" id="cd00520">
    <property type="entry name" value="RRF"/>
    <property type="match status" value="1"/>
</dbReference>
<dbReference type="FunFam" id="1.10.132.20:FF:000001">
    <property type="entry name" value="Ribosome-recycling factor"/>
    <property type="match status" value="1"/>
</dbReference>
<dbReference type="FunFam" id="3.30.1360.40:FF:000001">
    <property type="entry name" value="Ribosome-recycling factor"/>
    <property type="match status" value="1"/>
</dbReference>
<dbReference type="Gene3D" id="3.30.1360.40">
    <property type="match status" value="1"/>
</dbReference>
<dbReference type="Gene3D" id="1.10.132.20">
    <property type="entry name" value="Ribosome-recycling factor"/>
    <property type="match status" value="1"/>
</dbReference>
<dbReference type="HAMAP" id="MF_00040">
    <property type="entry name" value="RRF"/>
    <property type="match status" value="1"/>
</dbReference>
<dbReference type="InterPro" id="IPR002661">
    <property type="entry name" value="Ribosome_recyc_fac"/>
</dbReference>
<dbReference type="InterPro" id="IPR023584">
    <property type="entry name" value="Ribosome_recyc_fac_dom"/>
</dbReference>
<dbReference type="InterPro" id="IPR036191">
    <property type="entry name" value="RRF_sf"/>
</dbReference>
<dbReference type="NCBIfam" id="TIGR00496">
    <property type="entry name" value="frr"/>
    <property type="match status" value="1"/>
</dbReference>
<dbReference type="PANTHER" id="PTHR20982:SF3">
    <property type="entry name" value="MITOCHONDRIAL RIBOSOME RECYCLING FACTOR PSEUDO 1"/>
    <property type="match status" value="1"/>
</dbReference>
<dbReference type="PANTHER" id="PTHR20982">
    <property type="entry name" value="RIBOSOME RECYCLING FACTOR"/>
    <property type="match status" value="1"/>
</dbReference>
<dbReference type="Pfam" id="PF01765">
    <property type="entry name" value="RRF"/>
    <property type="match status" value="1"/>
</dbReference>
<dbReference type="SUPFAM" id="SSF55194">
    <property type="entry name" value="Ribosome recycling factor, RRF"/>
    <property type="match status" value="1"/>
</dbReference>